<evidence type="ECO:0000250" key="1">
    <source>
        <dbReference type="UniProtKB" id="O62247"/>
    </source>
</evidence>
<evidence type="ECO:0000255" key="2"/>
<evidence type="ECO:0000255" key="3">
    <source>
        <dbReference type="PROSITE-ProRule" id="PRU00031"/>
    </source>
</evidence>
<evidence type="ECO:0000269" key="4">
    <source>
    </source>
</evidence>
<evidence type="ECO:0000305" key="5"/>
<evidence type="ECO:0000312" key="6">
    <source>
        <dbReference type="EMBL" id="ACZ64266.1"/>
    </source>
</evidence>
<evidence type="ECO:0000312" key="7">
    <source>
        <dbReference type="EMBL" id="CDL94089.1"/>
    </source>
</evidence>
<sequence length="195" mass="21543">MKTALLSLILFSCHIWAVKHQAKKCTEDRECEEIWPGSTCQRARCRCPENYVRRKSPSREWVCLSVNDAATGQVGPPLTCPLPDGAGYQVILRGSSTNNLLSPPVLCSSKTNDCETGYECIQGLSPVDGLDGACCPDQITTCAHPIFDHESGTLERWGFDGSECVKFKWDPEKPSSANNFKTKLQCESYCVNIFA</sequence>
<accession>D3GGZ8</accession>
<gene>
    <name evidence="6" type="primary">bli-5</name>
    <name evidence="7" type="ORF">HCOI_00600900</name>
</gene>
<feature type="signal peptide" evidence="2">
    <location>
        <begin position="1"/>
        <end position="17"/>
    </location>
</feature>
<feature type="chain" id="PRO_5007650919" description="Kunitz-type protein bli-5" evidence="2">
    <location>
        <begin position="18"/>
        <end position="195"/>
    </location>
</feature>
<feature type="domain" description="BPTI/Kunitz inhibitor" evidence="3">
    <location>
        <begin position="120"/>
        <end position="190"/>
    </location>
</feature>
<feature type="disulfide bond" evidence="3">
    <location>
        <begin position="120"/>
        <end position="190"/>
    </location>
</feature>
<feature type="disulfide bond" evidence="3">
    <location>
        <begin position="164"/>
        <end position="186"/>
    </location>
</feature>
<protein>
    <recommendedName>
        <fullName evidence="5">Kunitz-type protein bli-5</fullName>
    </recommendedName>
    <alternativeName>
        <fullName evidence="1">Blistered cuticle protein 5</fullName>
    </alternativeName>
    <alternativeName>
        <fullName evidence="1">Kunitz-type protease inhibitor bli-5</fullName>
    </alternativeName>
</protein>
<organism evidence="6">
    <name type="scientific">Haemonchus contortus</name>
    <name type="common">Barber pole worm</name>
    <dbReference type="NCBI Taxonomy" id="6289"/>
    <lineage>
        <taxon>Eukaryota</taxon>
        <taxon>Metazoa</taxon>
        <taxon>Ecdysozoa</taxon>
        <taxon>Nematoda</taxon>
        <taxon>Chromadorea</taxon>
        <taxon>Rhabditida</taxon>
        <taxon>Rhabditina</taxon>
        <taxon>Rhabditomorpha</taxon>
        <taxon>Strongyloidea</taxon>
        <taxon>Trichostrongylidae</taxon>
        <taxon>Haemonchus</taxon>
    </lineage>
</organism>
<keyword id="KW-1015">Disulfide bond</keyword>
<keyword id="KW-0732">Signal</keyword>
<name>BLI5_HAECO</name>
<dbReference type="EMBL" id="FJ812515">
    <property type="protein sequence ID" value="ACZ64266.1"/>
    <property type="molecule type" value="Genomic_DNA"/>
</dbReference>
<dbReference type="EMBL" id="CAVP010054834">
    <property type="protein sequence ID" value="CDL94089.1"/>
    <property type="molecule type" value="Genomic_DNA"/>
</dbReference>
<dbReference type="SMR" id="D3GGZ8"/>
<dbReference type="WBParaSite" id="HCON_00022050-00001">
    <property type="protein sequence ID" value="HCON_00022050-00001"/>
    <property type="gene ID" value="HCON_00022050"/>
</dbReference>
<dbReference type="OMA" id="SREWVCL"/>
<dbReference type="OrthoDB" id="5770917at2759"/>
<dbReference type="Proteomes" id="UP000025227">
    <property type="component" value="Unplaced"/>
</dbReference>
<dbReference type="GO" id="GO:0004867">
    <property type="term" value="F:serine-type endopeptidase inhibitor activity"/>
    <property type="evidence" value="ECO:0007669"/>
    <property type="project" value="InterPro"/>
</dbReference>
<dbReference type="Gene3D" id="4.10.410.10">
    <property type="entry name" value="Pancreatic trypsin inhibitor Kunitz domain"/>
    <property type="match status" value="1"/>
</dbReference>
<dbReference type="InterPro" id="IPR053014">
    <property type="entry name" value="Cuticle_assoc_divergent"/>
</dbReference>
<dbReference type="InterPro" id="IPR002223">
    <property type="entry name" value="Kunitz_BPTI"/>
</dbReference>
<dbReference type="InterPro" id="IPR036880">
    <property type="entry name" value="Kunitz_BPTI_sf"/>
</dbReference>
<dbReference type="PANTHER" id="PTHR46339">
    <property type="entry name" value="PROTEIN CBG15282-RELATED"/>
    <property type="match status" value="1"/>
</dbReference>
<dbReference type="Pfam" id="PF00014">
    <property type="entry name" value="Kunitz_BPTI"/>
    <property type="match status" value="1"/>
</dbReference>
<dbReference type="SMART" id="SM00131">
    <property type="entry name" value="KU"/>
    <property type="match status" value="1"/>
</dbReference>
<dbReference type="SUPFAM" id="SSF57362">
    <property type="entry name" value="BPTI-like"/>
    <property type="match status" value="1"/>
</dbReference>
<reference evidence="6" key="1">
    <citation type="journal article" date="2010" name="Mol. Biochem. Parasitol.">
        <title>The kunitz domain protein BLI-5 plays a functionally conserved role in cuticle formation in a diverse range of nematodes.</title>
        <authorList>
            <person name="Stepek G."/>
            <person name="McCormack G."/>
            <person name="Page A.P."/>
        </authorList>
    </citation>
    <scope>NUCLEOTIDE SEQUENCE [GENOMIC DNA]</scope>
    <scope>FUNCTION</scope>
</reference>
<reference key="2">
    <citation type="journal article" date="2013" name="Genome Biol.">
        <title>The genome and transcriptome of Haemonchus contortus, a key model parasite for drug and vaccine discovery.</title>
        <authorList>
            <person name="Laing R."/>
            <person name="Kikuchi T."/>
            <person name="Martinelli A."/>
            <person name="Tsai I.J."/>
            <person name="Beech R.N."/>
            <person name="Redman E."/>
            <person name="Holroyd N."/>
            <person name="Bartley D.J."/>
            <person name="Beasley H."/>
            <person name="Britton C."/>
            <person name="Curran D."/>
            <person name="Devaney E."/>
            <person name="Gilabert A."/>
            <person name="Hunt M."/>
            <person name="Jackson F."/>
            <person name="Johnston S.L."/>
            <person name="Kryukov I."/>
            <person name="Li K."/>
            <person name="Morrison A.A."/>
            <person name="Reid A.J."/>
            <person name="Sargison N."/>
            <person name="Saunders G.I."/>
            <person name="Wasmuth J.D."/>
            <person name="Wolstenholme A."/>
            <person name="Berriman M."/>
            <person name="Gilleard J.S."/>
            <person name="Cotton J.A."/>
        </authorList>
    </citation>
    <scope>NUCLEOTIDE SEQUENCE [LARGE SCALE GENOMIC DNA]</scope>
    <source>
        <strain>MHco3(ISE)</strain>
    </source>
</reference>
<proteinExistence type="inferred from homology"/>
<comment type="function">
    <text evidence="4">Appears to lack serine protease inhibitor activity in vitro when tested with bovine pancreatic alpha-chymotrypsin and elastase. May be involved in cuticle biosynthesis.</text>
</comment>
<comment type="caution">
    <text evidence="4 5">Appears to have serine protease activity in vitro (PubMed:19716386). However, it is uncertain if this activity is genuine as bli-5 lacks all the catalytic features of serine proteases.</text>
</comment>